<comment type="catalytic activity">
    <reaction>
        <text>2 reduced [2Fe-2S]-[ferredoxin] + NADP(+) + H(+) = 2 oxidized [2Fe-2S]-[ferredoxin] + NADPH</text>
        <dbReference type="Rhea" id="RHEA:20125"/>
        <dbReference type="Rhea" id="RHEA-COMP:10000"/>
        <dbReference type="Rhea" id="RHEA-COMP:10001"/>
        <dbReference type="ChEBI" id="CHEBI:15378"/>
        <dbReference type="ChEBI" id="CHEBI:33737"/>
        <dbReference type="ChEBI" id="CHEBI:33738"/>
        <dbReference type="ChEBI" id="CHEBI:57783"/>
        <dbReference type="ChEBI" id="CHEBI:58349"/>
        <dbReference type="EC" id="1.18.1.2"/>
    </reaction>
</comment>
<comment type="cofactor">
    <cofactor evidence="1">
        <name>[4Fe-4S] cluster</name>
        <dbReference type="ChEBI" id="CHEBI:49883"/>
    </cofactor>
    <text evidence="1">Binds 1 or 2 [4Fe-4S] clusters.</text>
</comment>
<comment type="cofactor">
    <cofactor evidence="1">
        <name>FAD</name>
        <dbReference type="ChEBI" id="CHEBI:57692"/>
    </cofactor>
</comment>
<comment type="similarity">
    <text evidence="3">In the C-terminal section; belongs to the ferredoxin--NADP reductase family.</text>
</comment>
<name>FPRB_MYCTO</name>
<accession>P9WJI0</accession>
<accession>L0T6Q5</accession>
<accession>P65528</accession>
<accession>Q10547</accession>
<feature type="chain" id="PRO_0000427826" description="Probable ferredoxin/ferredoxin--NADP reductase">
    <location>
        <begin position="1"/>
        <end position="575"/>
    </location>
</feature>
<feature type="domain" description="4Fe-4S ferredoxin-type 1" evidence="2">
    <location>
        <begin position="2"/>
        <end position="29"/>
    </location>
</feature>
<feature type="domain" description="4Fe-4S ferredoxin-type 2" evidence="2">
    <location>
        <begin position="37"/>
        <end position="66"/>
    </location>
</feature>
<feature type="region of interest" description="Ferredoxin--NADP reductase">
    <location>
        <begin position="115"/>
        <end position="575"/>
    </location>
</feature>
<feature type="binding site" evidence="1">
    <location>
        <position position="9"/>
    </location>
    <ligand>
        <name>[4Fe-4S] cluster</name>
        <dbReference type="ChEBI" id="CHEBI:49883"/>
        <label>1</label>
    </ligand>
</feature>
<feature type="binding site" evidence="1">
    <location>
        <position position="15"/>
    </location>
    <ligand>
        <name>[4Fe-4S] cluster</name>
        <dbReference type="ChEBI" id="CHEBI:49883"/>
        <label>1</label>
    </ligand>
</feature>
<feature type="binding site" evidence="1">
    <location>
        <position position="19"/>
    </location>
    <ligand>
        <name>[4Fe-4S] cluster</name>
        <dbReference type="ChEBI" id="CHEBI:49883"/>
        <label>1</label>
    </ligand>
</feature>
<feature type="binding site" evidence="2">
    <location>
        <position position="46"/>
    </location>
    <ligand>
        <name>[4Fe-4S] cluster</name>
        <dbReference type="ChEBI" id="CHEBI:49883"/>
        <label>2</label>
    </ligand>
</feature>
<feature type="binding site" evidence="2">
    <location>
        <position position="49"/>
    </location>
    <ligand>
        <name>[4Fe-4S] cluster</name>
        <dbReference type="ChEBI" id="CHEBI:49883"/>
        <label>2</label>
    </ligand>
</feature>
<feature type="binding site" evidence="2">
    <location>
        <position position="52"/>
    </location>
    <ligand>
        <name>[4Fe-4S] cluster</name>
        <dbReference type="ChEBI" id="CHEBI:49883"/>
        <label>2</label>
    </ligand>
</feature>
<feature type="binding site" evidence="2">
    <location>
        <position position="56"/>
    </location>
    <ligand>
        <name>[4Fe-4S] cluster</name>
        <dbReference type="ChEBI" id="CHEBI:49883"/>
        <label>2</label>
    </ligand>
</feature>
<feature type="binding site" evidence="1">
    <location>
        <position position="123"/>
    </location>
    <ligand>
        <name>FAD</name>
        <dbReference type="ChEBI" id="CHEBI:57692"/>
    </ligand>
</feature>
<feature type="binding site" evidence="1">
    <location>
        <position position="143"/>
    </location>
    <ligand>
        <name>FAD</name>
        <dbReference type="ChEBI" id="CHEBI:57692"/>
    </ligand>
</feature>
<feature type="binding site" evidence="1">
    <location>
        <position position="151"/>
    </location>
    <ligand>
        <name>FAD</name>
        <dbReference type="ChEBI" id="CHEBI:57692"/>
    </ligand>
</feature>
<feature type="binding site" evidence="1">
    <location>
        <position position="187"/>
    </location>
    <ligand>
        <name>FAD</name>
        <dbReference type="ChEBI" id="CHEBI:57692"/>
    </ligand>
</feature>
<feature type="binding site" evidence="1">
    <location>
        <position position="213"/>
    </location>
    <ligand>
        <name>NADP(+)</name>
        <dbReference type="ChEBI" id="CHEBI:58349"/>
    </ligand>
</feature>
<feature type="binding site" evidence="1">
    <location>
        <begin position="258"/>
        <end position="261"/>
    </location>
    <ligand>
        <name>NADP(+)</name>
        <dbReference type="ChEBI" id="CHEBI:58349"/>
    </ligand>
</feature>
<feature type="binding site" evidence="1">
    <location>
        <begin position="302"/>
        <end position="303"/>
    </location>
    <ligand>
        <name>NADP(+)</name>
        <dbReference type="ChEBI" id="CHEBI:58349"/>
    </ligand>
</feature>
<feature type="binding site" evidence="1">
    <location>
        <position position="314"/>
    </location>
    <ligand>
        <name>NADP(+)</name>
        <dbReference type="ChEBI" id="CHEBI:58349"/>
    </ligand>
</feature>
<feature type="binding site" evidence="1">
    <location>
        <position position="456"/>
    </location>
    <ligand>
        <name>FAD</name>
        <dbReference type="ChEBI" id="CHEBI:57692"/>
    </ligand>
</feature>
<feature type="binding site" evidence="1">
    <location>
        <begin position="463"/>
        <end position="465"/>
    </location>
    <ligand>
        <name>FAD</name>
        <dbReference type="ChEBI" id="CHEBI:57692"/>
    </ligand>
</feature>
<feature type="binding site" evidence="1">
    <location>
        <position position="463"/>
    </location>
    <ligand>
        <name>NADP(+)</name>
        <dbReference type="ChEBI" id="CHEBI:58349"/>
    </ligand>
</feature>
<evidence type="ECO:0000250" key="1"/>
<evidence type="ECO:0000255" key="2">
    <source>
        <dbReference type="PROSITE-ProRule" id="PRU00711"/>
    </source>
</evidence>
<evidence type="ECO:0000305" key="3"/>
<dbReference type="EC" id="1.18.1.2"/>
<dbReference type="EMBL" id="AE000516">
    <property type="protein sequence ID" value="AAK45151.1"/>
    <property type="molecule type" value="Genomic_DNA"/>
</dbReference>
<dbReference type="PIR" id="C70781">
    <property type="entry name" value="C70781"/>
</dbReference>
<dbReference type="RefSeq" id="WP_003404631.1">
    <property type="nucleotide sequence ID" value="NZ_KK341227.1"/>
</dbReference>
<dbReference type="SMR" id="P9WJI0"/>
<dbReference type="KEGG" id="mtc:MT0909"/>
<dbReference type="PATRIC" id="fig|83331.31.peg.976"/>
<dbReference type="HOGENOM" id="CLU_024722_4_1_11"/>
<dbReference type="Proteomes" id="UP000001020">
    <property type="component" value="Chromosome"/>
</dbReference>
<dbReference type="GO" id="GO:0051539">
    <property type="term" value="F:4 iron, 4 sulfur cluster binding"/>
    <property type="evidence" value="ECO:0007669"/>
    <property type="project" value="UniProtKB-KW"/>
</dbReference>
<dbReference type="GO" id="GO:0004324">
    <property type="term" value="F:ferredoxin-NADP+ reductase activity"/>
    <property type="evidence" value="ECO:0007669"/>
    <property type="project" value="UniProtKB-EC"/>
</dbReference>
<dbReference type="GO" id="GO:0046872">
    <property type="term" value="F:metal ion binding"/>
    <property type="evidence" value="ECO:0007669"/>
    <property type="project" value="UniProtKB-KW"/>
</dbReference>
<dbReference type="CDD" id="cd04410">
    <property type="entry name" value="DMSOR_beta-like"/>
    <property type="match status" value="1"/>
</dbReference>
<dbReference type="FunFam" id="3.50.50.60:FF:000229">
    <property type="entry name" value="NADPH:adrenodoxin oxidoreductase, mitochondrial"/>
    <property type="match status" value="1"/>
</dbReference>
<dbReference type="Gene3D" id="3.30.70.20">
    <property type="match status" value="1"/>
</dbReference>
<dbReference type="Gene3D" id="3.50.50.60">
    <property type="entry name" value="FAD/NAD(P)-binding domain"/>
    <property type="match status" value="1"/>
</dbReference>
<dbReference type="Gene3D" id="3.40.50.720">
    <property type="entry name" value="NAD(P)-binding Rossmann-like Domain"/>
    <property type="match status" value="1"/>
</dbReference>
<dbReference type="InterPro" id="IPR017896">
    <property type="entry name" value="4Fe4S_Fe-S-bd"/>
</dbReference>
<dbReference type="InterPro" id="IPR017900">
    <property type="entry name" value="4Fe4S_Fe_S_CS"/>
</dbReference>
<dbReference type="InterPro" id="IPR036188">
    <property type="entry name" value="FAD/NAD-bd_sf"/>
</dbReference>
<dbReference type="InterPro" id="IPR023753">
    <property type="entry name" value="FAD/NAD-binding_dom"/>
</dbReference>
<dbReference type="InterPro" id="IPR055275">
    <property type="entry name" value="Ferredox_Rdtase"/>
</dbReference>
<dbReference type="PANTHER" id="PTHR48467">
    <property type="entry name" value="GLUTAMATE SYNTHASE 1 [NADH], CHLOROPLASTIC-LIKE"/>
    <property type="match status" value="1"/>
</dbReference>
<dbReference type="PANTHER" id="PTHR48467:SF1">
    <property type="entry name" value="GLUTAMATE SYNTHASE 1 [NADH], CHLOROPLASTIC-LIKE"/>
    <property type="match status" value="1"/>
</dbReference>
<dbReference type="Pfam" id="PF00037">
    <property type="entry name" value="Fer4"/>
    <property type="match status" value="1"/>
</dbReference>
<dbReference type="Pfam" id="PF07992">
    <property type="entry name" value="Pyr_redox_2"/>
    <property type="match status" value="1"/>
</dbReference>
<dbReference type="PRINTS" id="PR00419">
    <property type="entry name" value="ADXRDTASE"/>
</dbReference>
<dbReference type="SUPFAM" id="SSF54862">
    <property type="entry name" value="4Fe-4S ferredoxins"/>
    <property type="match status" value="1"/>
</dbReference>
<dbReference type="SUPFAM" id="SSF51971">
    <property type="entry name" value="Nucleotide-binding domain"/>
    <property type="match status" value="1"/>
</dbReference>
<dbReference type="PROSITE" id="PS00198">
    <property type="entry name" value="4FE4S_FER_1"/>
    <property type="match status" value="1"/>
</dbReference>
<dbReference type="PROSITE" id="PS51379">
    <property type="entry name" value="4FE4S_FER_2"/>
    <property type="match status" value="2"/>
</dbReference>
<keyword id="KW-0004">4Fe-4S</keyword>
<keyword id="KW-0249">Electron transport</keyword>
<keyword id="KW-0274">FAD</keyword>
<keyword id="KW-0285">Flavoprotein</keyword>
<keyword id="KW-0408">Iron</keyword>
<keyword id="KW-0411">Iron-sulfur</keyword>
<keyword id="KW-0479">Metal-binding</keyword>
<keyword id="KW-0521">NADP</keyword>
<keyword id="KW-0560">Oxidoreductase</keyword>
<keyword id="KW-1185">Reference proteome</keyword>
<keyword id="KW-0677">Repeat</keyword>
<keyword id="KW-0813">Transport</keyword>
<gene>
    <name type="primary">fprB</name>
    <name type="ordered locus">MT0909</name>
</gene>
<reference key="1">
    <citation type="journal article" date="2002" name="J. Bacteriol.">
        <title>Whole-genome comparison of Mycobacterium tuberculosis clinical and laboratory strains.</title>
        <authorList>
            <person name="Fleischmann R.D."/>
            <person name="Alland D."/>
            <person name="Eisen J.A."/>
            <person name="Carpenter L."/>
            <person name="White O."/>
            <person name="Peterson J.D."/>
            <person name="DeBoy R.T."/>
            <person name="Dodson R.J."/>
            <person name="Gwinn M.L."/>
            <person name="Haft D.H."/>
            <person name="Hickey E.K."/>
            <person name="Kolonay J.F."/>
            <person name="Nelson W.C."/>
            <person name="Umayam L.A."/>
            <person name="Ermolaeva M.D."/>
            <person name="Salzberg S.L."/>
            <person name="Delcher A."/>
            <person name="Utterback T.R."/>
            <person name="Weidman J.F."/>
            <person name="Khouri H.M."/>
            <person name="Gill J."/>
            <person name="Mikula A."/>
            <person name="Bishai W."/>
            <person name="Jacobs W.R. Jr."/>
            <person name="Venter J.C."/>
            <person name="Fraser C.M."/>
        </authorList>
    </citation>
    <scope>NUCLEOTIDE SEQUENCE [LARGE SCALE GENOMIC DNA]</scope>
    <source>
        <strain>CDC 1551 / Oshkosh</strain>
    </source>
</reference>
<sequence length="575" mass="61337">MPHVITQSCCNDASCVFACPVNCIHPTPDEPGFATSEMLYIDPVACVDCGACVTACPVSAIAPNTRLDFEQLPFVEINASYYPKRPAGVKLAPTSKLAPVTPAAEVRVRRQPLTVAVVGSGPAAMYAADELLVQQGVQVNVFEKLPTPYGLVRSGVAPDHQNTKRVTRLFDRIAGHRRFRFYLNVEIGKHLGHAELLAHHHAVLYAVGAPDDRRLTIDGMGLPGTGTATELVAWLNGHPDFNDLPVDLSHERVVIIGNGNVALDVARVLAADPHELAATDIADHALSALRNSAVREVVVAARRGPAHSAFTLPELIGLTAGADVVLDPGDHQRVLDDLAIVADPLTRNKLEILSTLGDGSAPARRVGRPRIRLAYRLTPRRVLGQRRAGGVQFSVTGTDELRQLDAGLVLTSIGYRGKPIPDLPFDEQAALVPNDGGRVIDPGTGEPVPGAYVAGWIKRGPTGFIGTNKSCSMQTVQALVADFNDGRLTDPVATPTALDQLVQARQPQAIGCAGWRAIDAAEIARGSADGRVRNKFTDVAEMLAAATSAPKEPLRRRVLARLRDLGQPIVLTVPL</sequence>
<proteinExistence type="inferred from homology"/>
<organism>
    <name type="scientific">Mycobacterium tuberculosis (strain CDC 1551 / Oshkosh)</name>
    <dbReference type="NCBI Taxonomy" id="83331"/>
    <lineage>
        <taxon>Bacteria</taxon>
        <taxon>Bacillati</taxon>
        <taxon>Actinomycetota</taxon>
        <taxon>Actinomycetes</taxon>
        <taxon>Mycobacteriales</taxon>
        <taxon>Mycobacteriaceae</taxon>
        <taxon>Mycobacterium</taxon>
        <taxon>Mycobacterium tuberculosis complex</taxon>
    </lineage>
</organism>
<protein>
    <recommendedName>
        <fullName>Probable ferredoxin/ferredoxin--NADP reductase</fullName>
        <shortName>FNR</shortName>
        <ecNumber>1.18.1.2</ecNumber>
    </recommendedName>
</protein>